<keyword id="KW-0002">3D-structure</keyword>
<keyword id="KW-1185">Reference proteome</keyword>
<keyword id="KW-0808">Transferase</keyword>
<protein>
    <recommendedName>
        <fullName evidence="3">Dimethylallyltryptophan synthase 1</fullName>
        <shortName evidence="3">DMATS 1</shortName>
        <ecNumber evidence="1 2">2.5.1.-</ecNumber>
        <ecNumber evidence="2">2.5.1.122</ecNumber>
    </recommendedName>
    <alternativeName>
        <fullName evidence="3">DMATS1 biosynthesis cluster protein DMATS1</fullName>
    </alternativeName>
</protein>
<proteinExistence type="evidence at protein level"/>
<dbReference type="EC" id="2.5.1.-" evidence="1 2"/>
<dbReference type="EC" id="2.5.1.122" evidence="2"/>
<dbReference type="EMBL" id="HF679031">
    <property type="protein sequence ID" value="CCT73985.1"/>
    <property type="molecule type" value="Genomic_DNA"/>
</dbReference>
<dbReference type="PDB" id="8DAY">
    <property type="method" value="X-ray"/>
    <property type="resolution" value="2.55 A"/>
    <property type="chains" value="A/B/C/D=1-419"/>
</dbReference>
<dbReference type="PDB" id="8DAZ">
    <property type="method" value="X-ray"/>
    <property type="resolution" value="2.49 A"/>
    <property type="chains" value="A/B/C/D=1-419"/>
</dbReference>
<dbReference type="PDB" id="8DB0">
    <property type="method" value="X-ray"/>
    <property type="resolution" value="2.26 A"/>
    <property type="chains" value="A/B/C/D=1-419"/>
</dbReference>
<dbReference type="PDB" id="8DB1">
    <property type="method" value="X-ray"/>
    <property type="resolution" value="2.72 A"/>
    <property type="chains" value="A/B/C/D=1-419"/>
</dbReference>
<dbReference type="PDBsum" id="8DAY"/>
<dbReference type="PDBsum" id="8DAZ"/>
<dbReference type="PDBsum" id="8DB0"/>
<dbReference type="PDBsum" id="8DB1"/>
<dbReference type="SMR" id="S0EH60"/>
<dbReference type="STRING" id="1279085.S0EH60"/>
<dbReference type="EnsemblFungi" id="CCT73985">
    <property type="protein sequence ID" value="CCT73985"/>
    <property type="gene ID" value="FFUJ_09179"/>
</dbReference>
<dbReference type="VEuPathDB" id="FungiDB:FFUJ_09179"/>
<dbReference type="HOGENOM" id="CLU_037431_2_2_1"/>
<dbReference type="Proteomes" id="UP000016800">
    <property type="component" value="Chromosome 9"/>
</dbReference>
<dbReference type="GO" id="GO:0016765">
    <property type="term" value="F:transferase activity, transferring alkyl or aryl (other than methyl) groups"/>
    <property type="evidence" value="ECO:0007669"/>
    <property type="project" value="InterPro"/>
</dbReference>
<dbReference type="GO" id="GO:0009820">
    <property type="term" value="P:alkaloid metabolic process"/>
    <property type="evidence" value="ECO:0007669"/>
    <property type="project" value="InterPro"/>
</dbReference>
<dbReference type="CDD" id="cd13929">
    <property type="entry name" value="PT-DMATS_CymD"/>
    <property type="match status" value="1"/>
</dbReference>
<dbReference type="InterPro" id="IPR033964">
    <property type="entry name" value="Aro_prenylTrfase"/>
</dbReference>
<dbReference type="InterPro" id="IPR017795">
    <property type="entry name" value="Aro_prenylTrfase_DMATS"/>
</dbReference>
<dbReference type="InterPro" id="IPR012148">
    <property type="entry name" value="DMATS-type_fun"/>
</dbReference>
<dbReference type="NCBIfam" id="TIGR03429">
    <property type="entry name" value="arom_pren_DMATS"/>
    <property type="match status" value="1"/>
</dbReference>
<dbReference type="PANTHER" id="PTHR40627">
    <property type="entry name" value="INDOLE PRENYLTRANSFERASE TDIB-RELATED"/>
    <property type="match status" value="1"/>
</dbReference>
<dbReference type="PANTHER" id="PTHR40627:SF4">
    <property type="entry name" value="PRENYLTRANSFERASE ASQH1-RELATED"/>
    <property type="match status" value="1"/>
</dbReference>
<dbReference type="Pfam" id="PF11991">
    <property type="entry name" value="Trp_DMAT"/>
    <property type="match status" value="1"/>
</dbReference>
<dbReference type="PIRSF" id="PIRSF000509">
    <property type="entry name" value="Trp_DMAT"/>
    <property type="match status" value="1"/>
</dbReference>
<dbReference type="SFLD" id="SFLDS00036">
    <property type="entry name" value="Aromatic_Prenyltransferase"/>
    <property type="match status" value="1"/>
</dbReference>
<dbReference type="SFLD" id="SFLDG01162">
    <property type="entry name" value="I"/>
    <property type="match status" value="1"/>
</dbReference>
<organism>
    <name type="scientific">Gibberella fujikuroi (strain CBS 195.34 / IMI 58289 / NRRL A-6831)</name>
    <name type="common">Bakanae and foot rot disease fungus</name>
    <name type="synonym">Fusarium fujikuroi</name>
    <dbReference type="NCBI Taxonomy" id="1279085"/>
    <lineage>
        <taxon>Eukaryota</taxon>
        <taxon>Fungi</taxon>
        <taxon>Dikarya</taxon>
        <taxon>Ascomycota</taxon>
        <taxon>Pezizomycotina</taxon>
        <taxon>Sordariomycetes</taxon>
        <taxon>Hypocreomycetidae</taxon>
        <taxon>Hypocreales</taxon>
        <taxon>Nectriaceae</taxon>
        <taxon>Fusarium</taxon>
        <taxon>Fusarium fujikuroi species complex</taxon>
    </lineage>
</organism>
<comment type="function">
    <text evidence="1 2 5">Dimethylallyltryptophan synthase; part of the DMATS1 gene cluster that mediates the biosynthesis of a reversely N-prenylated monomeric L-tryptophan (r-N-DMAT) (PubMed:28295904, PubMed:36084241). DMATS1 catalyzes the reverse N-prenylation of L-Trp with DMAPP to yield N-dimethylallyl-L-tryptophan (PubMed:28295904, PubMed:36084241). DMATS1 exhibits unusually broad substrate specificity and can utilize geranyl diphosphate (GPP) or L-Tyr as an alternative prenyl donor or acceptor, respectively (PubMed:36084241). Is able to catalyze both forward and reverse prenylation, i.e., at C1 or C3 of DMAPP; and it can catalyze C-N and C-O bond-forming reactions (PubMed:36084241). The main product of the cluster is the reverse-N-dimethylallyl-L-tryptophan (r-N-DMAT) produced by the dimethylallyltryptophan synthase DMATS1 and it remains unclear whether this metabolite undergoes further modifications when silent gene clusters are activated (PubMed:28295904). The acetylated form of r-N-DMAT, ac-r-N-DMAT, is also produced (PubMed:28295904). The roles of the cytochrome P450 monooxygenase FFUJ_09176 and the methyltransferase FFUJ_09178 have still to be elucidated (Probable).</text>
</comment>
<comment type="catalytic activity">
    <reaction evidence="2">
        <text>L-tyrosine + dimethylallyl diphosphate = 4-O-dimethylallyl-L-tyrosine + diphosphate</text>
        <dbReference type="Rhea" id="RHEA:41584"/>
        <dbReference type="ChEBI" id="CHEBI:33019"/>
        <dbReference type="ChEBI" id="CHEBI:57623"/>
        <dbReference type="ChEBI" id="CHEBI:58315"/>
        <dbReference type="ChEBI" id="CHEBI:78314"/>
        <dbReference type="EC" id="2.5.1.122"/>
    </reaction>
    <physiologicalReaction direction="left-to-right" evidence="2">
        <dbReference type="Rhea" id="RHEA:41585"/>
    </physiologicalReaction>
</comment>
<comment type="induction">
    <text evidence="1">Expression is negaticely regulated by the global nitrogen regulator areA.</text>
</comment>
<comment type="disruption phenotype">
    <text evidence="1">Impairs the production of r-N-DMAT and ac-r-N-DMAT.</text>
</comment>
<comment type="similarity">
    <text evidence="4">Belongs to the tryptophan dimethylallyltransferase family.</text>
</comment>
<sequence length="419" mass="47291">MLLQASQATQSVWKTLNKWLPPLSRDKDWWWKTLGPQINTLLTEADYDLNERYEALLLLYRWVVPEMGPRPRSSVAPSKSFMTDDHSPIEYSWKWISGNKKPEIRYAVELVSPLAGSKQDPFNQIPTRNLVYNLAKIIPELDLTWFEHFWHELLGPGSPTTSTSGVLTKGSTVFAALEMLHGHLSVKVYFIPVETPDFSAWHQIKHAIEASGCPNLEALNHVDAYLSSHDDGRQLRPFMLAIDLVEPAASRLKIYARSNQTSFRFVRDVMTIGGLRTDLDRSIEKFSDLWKRALGLDPDTPPEDELPKVDHLTSGAVFNFDVAPKSQIPEVKAYIPVRHYANNDLQAALGLIGYLEDHGHGGYSQSYLRGLDMLAPSGQLDQATGVQTYFAVACQGEDLSLTSYLNPQFYAAFQEPERT</sequence>
<reference key="1">
    <citation type="journal article" date="2013" name="PLoS Pathog.">
        <title>Deciphering the cryptic genome: genome-wide analyses of the rice pathogen Fusarium fujikuroi reveal complex regulation of secondary metabolism and novel metabolites.</title>
        <authorList>
            <person name="Wiemann P."/>
            <person name="Sieber C.M.K."/>
            <person name="von Bargen K.W."/>
            <person name="Studt L."/>
            <person name="Niehaus E.-M."/>
            <person name="Espino J.J."/>
            <person name="Huss K."/>
            <person name="Michielse C.B."/>
            <person name="Albermann S."/>
            <person name="Wagner D."/>
            <person name="Bergner S.V."/>
            <person name="Connolly L.R."/>
            <person name="Fischer A."/>
            <person name="Reuter G."/>
            <person name="Kleigrewe K."/>
            <person name="Bald T."/>
            <person name="Wingfield B.D."/>
            <person name="Ophir R."/>
            <person name="Freeman S."/>
            <person name="Hippler M."/>
            <person name="Smith K.M."/>
            <person name="Brown D.W."/>
            <person name="Proctor R.H."/>
            <person name="Muensterkoetter M."/>
            <person name="Freitag M."/>
            <person name="Humpf H.-U."/>
            <person name="Gueldener U."/>
            <person name="Tudzynski B."/>
        </authorList>
    </citation>
    <scope>NUCLEOTIDE SEQUENCE [LARGE SCALE GENOMIC DNA]</scope>
    <source>
        <strain>CBS 195.34 / IMI 58289 / NRRL A-6831</strain>
    </source>
</reference>
<reference key="2">
    <citation type="journal article" date="2017" name="ChemBioChem">
        <title>A Fungal N-Dimethylallyltryptophan Metabolite from Fusarium fujikuroi.</title>
        <authorList>
            <person name="Arndt B."/>
            <person name="Janevska S."/>
            <person name="Schmid R."/>
            <person name="Huebner F."/>
            <person name="Tudzynski B."/>
            <person name="Humpf H.U."/>
        </authorList>
    </citation>
    <scope>FUNCTION</scope>
    <scope>INDUCTION</scope>
    <scope>DISRUPTION PHENOTYPE</scope>
    <scope>CATALYTIC ACTIVITY</scope>
    <scope>PATHWAY</scope>
</reference>
<reference evidence="7 8 9 10" key="3">
    <citation type="journal article" date="2022" name="Biochemistry">
        <title>Structural Basis of Substrate Promiscuity and Catalysis by the Reverse Prenyltransferase N-Dimethylallyl-l-tryptophan Synthase from Fusarium fujikuroi.</title>
        <authorList>
            <person name="Eaton S.A."/>
            <person name="Ronnebaum T.A."/>
            <person name="Roose B.W."/>
            <person name="Christianson D.W."/>
        </authorList>
    </citation>
    <scope>X-RAY CRYSTALLOGRAPHY (2.26 ANGSTROMS) IN COMPLEX WITH L-TYROSINE; L-TRYPTOPHAN; GERANYL DIPHOSPHATE ANALOG GSPP AND DIMETHYLALLYL DIPHOSPHATE ANALOG DMSPP</scope>
    <scope>FUNCTION</scope>
    <scope>CATALYTIC ACTIVITY</scope>
    <scope>SUBSTRATE SPECIFICITY</scope>
    <scope>MUTAGENESIS OF GLU-90; ARG-257 AND TYR-389</scope>
</reference>
<gene>
    <name evidence="3" type="primary">DMATS1</name>
    <name type="ORF">FFUJ_09179</name>
</gene>
<name>DMAT1_GIBF5</name>
<evidence type="ECO:0000269" key="1">
    <source>
    </source>
</evidence>
<evidence type="ECO:0000269" key="2">
    <source>
    </source>
</evidence>
<evidence type="ECO:0000303" key="3">
    <source>
    </source>
</evidence>
<evidence type="ECO:0000305" key="4"/>
<evidence type="ECO:0000305" key="5">
    <source>
    </source>
</evidence>
<evidence type="ECO:0000305" key="6">
    <source>
    </source>
</evidence>
<evidence type="ECO:0007744" key="7">
    <source>
        <dbReference type="PDB" id="8DAY"/>
    </source>
</evidence>
<evidence type="ECO:0007744" key="8">
    <source>
        <dbReference type="PDB" id="8DAZ"/>
    </source>
</evidence>
<evidence type="ECO:0007744" key="9">
    <source>
        <dbReference type="PDB" id="8DB0"/>
    </source>
</evidence>
<evidence type="ECO:0007744" key="10">
    <source>
        <dbReference type="PDB" id="8DB1"/>
    </source>
</evidence>
<evidence type="ECO:0007829" key="11">
    <source>
        <dbReference type="PDB" id="8DAY"/>
    </source>
</evidence>
<evidence type="ECO:0007829" key="12">
    <source>
        <dbReference type="PDB" id="8DB0"/>
    </source>
</evidence>
<evidence type="ECO:0007829" key="13">
    <source>
        <dbReference type="PDB" id="8DB1"/>
    </source>
</evidence>
<accession>S0EH60</accession>
<feature type="chain" id="PRO_0000452656" description="Dimethylallyltryptophan synthase 1">
    <location>
        <begin position="1"/>
        <end position="419"/>
    </location>
</feature>
<feature type="binding site" evidence="2 8 9 10">
    <location>
        <position position="81"/>
    </location>
    <ligand>
        <name>L-tryptophan</name>
        <dbReference type="ChEBI" id="CHEBI:57912"/>
    </ligand>
</feature>
<feature type="binding site" evidence="2 7">
    <location>
        <position position="81"/>
    </location>
    <ligand>
        <name>L-tyrosine</name>
        <dbReference type="ChEBI" id="CHEBI:58315"/>
    </ligand>
</feature>
<feature type="binding site" evidence="2 8 9 10">
    <location>
        <position position="82"/>
    </location>
    <ligand>
        <name>L-tryptophan</name>
        <dbReference type="ChEBI" id="CHEBI:57912"/>
    </ligand>
</feature>
<feature type="binding site" evidence="2 8 9 10">
    <location>
        <position position="90"/>
    </location>
    <ligand>
        <name>L-tryptophan</name>
        <dbReference type="ChEBI" id="CHEBI:57912"/>
    </ligand>
</feature>
<feature type="binding site" evidence="6 8">
    <location>
        <position position="105"/>
    </location>
    <ligand>
        <name>(2E)-geranyl diphosphate</name>
        <dbReference type="ChEBI" id="CHEBI:58057"/>
    </ligand>
</feature>
<feature type="binding site" evidence="6 9">
    <location>
        <position position="105"/>
    </location>
    <ligand>
        <name>dimethylallyl diphosphate</name>
        <dbReference type="ChEBI" id="CHEBI:57623"/>
    </ligand>
</feature>
<feature type="binding site" evidence="6 8">
    <location>
        <position position="187"/>
    </location>
    <ligand>
        <name>(2E)-geranyl diphosphate</name>
        <dbReference type="ChEBI" id="CHEBI:58057"/>
    </ligand>
</feature>
<feature type="binding site" evidence="6 9">
    <location>
        <position position="187"/>
    </location>
    <ligand>
        <name>dimethylallyl diphosphate</name>
        <dbReference type="ChEBI" id="CHEBI:57623"/>
    </ligand>
</feature>
<feature type="binding site" evidence="6 8">
    <location>
        <position position="189"/>
    </location>
    <ligand>
        <name>(2E)-geranyl diphosphate</name>
        <dbReference type="ChEBI" id="CHEBI:58057"/>
    </ligand>
</feature>
<feature type="binding site" evidence="6 9">
    <location>
        <position position="189"/>
    </location>
    <ligand>
        <name>dimethylallyl diphosphate</name>
        <dbReference type="ChEBI" id="CHEBI:57623"/>
    </ligand>
</feature>
<feature type="binding site" evidence="6 8">
    <location>
        <position position="251"/>
    </location>
    <ligand>
        <name>(2E)-geranyl diphosphate</name>
        <dbReference type="ChEBI" id="CHEBI:58057"/>
    </ligand>
</feature>
<feature type="binding site" evidence="6 9">
    <location>
        <position position="251"/>
    </location>
    <ligand>
        <name>dimethylallyl diphosphate</name>
        <dbReference type="ChEBI" id="CHEBI:57623"/>
    </ligand>
</feature>
<feature type="binding site" evidence="6 8">
    <location>
        <position position="253"/>
    </location>
    <ligand>
        <name>(2E)-geranyl diphosphate</name>
        <dbReference type="ChEBI" id="CHEBI:58057"/>
    </ligand>
</feature>
<feature type="binding site" evidence="6 9">
    <location>
        <position position="253"/>
    </location>
    <ligand>
        <name>dimethylallyl diphosphate</name>
        <dbReference type="ChEBI" id="CHEBI:57623"/>
    </ligand>
</feature>
<feature type="binding site" evidence="6 8">
    <location>
        <position position="255"/>
    </location>
    <ligand>
        <name>(2E)-geranyl diphosphate</name>
        <dbReference type="ChEBI" id="CHEBI:58057"/>
    </ligand>
</feature>
<feature type="binding site" evidence="6 9">
    <location>
        <position position="255"/>
    </location>
    <ligand>
        <name>dimethylallyl diphosphate</name>
        <dbReference type="ChEBI" id="CHEBI:57623"/>
    </ligand>
</feature>
<feature type="binding site" evidence="2 8 9 10">
    <location>
        <position position="257"/>
    </location>
    <ligand>
        <name>L-tryptophan</name>
        <dbReference type="ChEBI" id="CHEBI:57912"/>
    </ligand>
</feature>
<feature type="binding site" evidence="2 7">
    <location>
        <position position="257"/>
    </location>
    <ligand>
        <name>L-tyrosine</name>
        <dbReference type="ChEBI" id="CHEBI:58315"/>
    </ligand>
</feature>
<feature type="binding site" evidence="6 8">
    <location>
        <position position="332"/>
    </location>
    <ligand>
        <name>(2E)-geranyl diphosphate</name>
        <dbReference type="ChEBI" id="CHEBI:58057"/>
    </ligand>
</feature>
<feature type="binding site" evidence="6 9">
    <location>
        <position position="332"/>
    </location>
    <ligand>
        <name>dimethylallyl diphosphate</name>
        <dbReference type="ChEBI" id="CHEBI:57623"/>
    </ligand>
</feature>
<feature type="binding site" evidence="6 8">
    <location>
        <position position="334"/>
    </location>
    <ligand>
        <name>(2E)-geranyl diphosphate</name>
        <dbReference type="ChEBI" id="CHEBI:58057"/>
    </ligand>
</feature>
<feature type="binding site" evidence="6 9">
    <location>
        <position position="334"/>
    </location>
    <ligand>
        <name>dimethylallyl diphosphate</name>
        <dbReference type="ChEBI" id="CHEBI:57623"/>
    </ligand>
</feature>
<feature type="binding site" evidence="2 8 9 10">
    <location>
        <position position="389"/>
    </location>
    <ligand>
        <name>L-tryptophan</name>
        <dbReference type="ChEBI" id="CHEBI:57912"/>
    </ligand>
</feature>
<feature type="binding site" evidence="2 7">
    <location>
        <position position="389"/>
    </location>
    <ligand>
        <name>L-tyrosine</name>
        <dbReference type="ChEBI" id="CHEBI:58315"/>
    </ligand>
</feature>
<feature type="binding site" evidence="6 9">
    <location>
        <position position="404"/>
    </location>
    <ligand>
        <name>(2E)-geranyl diphosphate</name>
        <dbReference type="ChEBI" id="CHEBI:58057"/>
    </ligand>
</feature>
<feature type="mutagenesis site" description="Impairs catalytic activity when both GPP and DMAPP donors and L-Tyr and L-Trp acceptors are used." evidence="2">
    <original>E</original>
    <variation>A</variation>
    <location>
        <position position="90"/>
    </location>
</feature>
<feature type="mutagenesis site" description="Reduces the catalytic activity when DMAPP and L-Trp are used as donor and acceptor, respectively; and almost abolishes the activity when GPP is used as a donor or L-Tyr as an acceptor." evidence="2">
    <original>R</original>
    <variation>L</variation>
    <location>
        <position position="257"/>
    </location>
</feature>
<feature type="mutagenesis site" description="Reduces the catalytic activity when DMAPP and L-Trp are used as donor and acceptor, respectively; and almost abolishes the activity when GPP is used as a donor or L-Tyr as an acceptor." evidence="2">
    <original>Y</original>
    <variation>A</variation>
    <location>
        <position position="389"/>
    </location>
</feature>
<feature type="helix" evidence="12">
    <location>
        <begin position="12"/>
        <end position="19"/>
    </location>
</feature>
<feature type="helix" evidence="12">
    <location>
        <begin position="25"/>
        <end position="44"/>
    </location>
</feature>
<feature type="helix" evidence="12">
    <location>
        <begin position="49"/>
        <end position="62"/>
    </location>
</feature>
<feature type="helix" evidence="12">
    <location>
        <begin position="64"/>
        <end position="66"/>
    </location>
</feature>
<feature type="strand" evidence="12">
    <location>
        <begin position="73"/>
        <end position="75"/>
    </location>
</feature>
<feature type="strand" evidence="13">
    <location>
        <begin position="81"/>
        <end position="83"/>
    </location>
</feature>
<feature type="strand" evidence="12">
    <location>
        <begin position="88"/>
        <end position="95"/>
    </location>
</feature>
<feature type="helix" evidence="12">
    <location>
        <begin position="97"/>
        <end position="99"/>
    </location>
</feature>
<feature type="strand" evidence="12">
    <location>
        <begin position="103"/>
        <end position="108"/>
    </location>
</feature>
<feature type="helix" evidence="12">
    <location>
        <begin position="125"/>
        <end position="137"/>
    </location>
</feature>
<feature type="helix" evidence="12">
    <location>
        <begin position="144"/>
        <end position="154"/>
    </location>
</feature>
<feature type="strand" evidence="12">
    <location>
        <begin position="172"/>
        <end position="179"/>
    </location>
</feature>
<feature type="strand" evidence="12">
    <location>
        <begin position="181"/>
        <end position="190"/>
    </location>
</feature>
<feature type="helix" evidence="12">
    <location>
        <begin position="200"/>
        <end position="209"/>
    </location>
</feature>
<feature type="turn" evidence="12">
    <location>
        <begin position="210"/>
        <end position="212"/>
    </location>
</feature>
<feature type="helix" evidence="12">
    <location>
        <begin position="217"/>
        <end position="228"/>
    </location>
</feature>
<feature type="helix" evidence="12">
    <location>
        <begin position="232"/>
        <end position="234"/>
    </location>
</feature>
<feature type="strand" evidence="12">
    <location>
        <begin position="236"/>
        <end position="245"/>
    </location>
</feature>
<feature type="turn" evidence="12">
    <location>
        <begin position="247"/>
        <end position="249"/>
    </location>
</feature>
<feature type="strand" evidence="12">
    <location>
        <begin position="252"/>
        <end position="259"/>
    </location>
</feature>
<feature type="helix" evidence="12">
    <location>
        <begin position="263"/>
        <end position="270"/>
    </location>
</feature>
<feature type="turn" evidence="12">
    <location>
        <begin position="271"/>
        <end position="275"/>
    </location>
</feature>
<feature type="helix" evidence="12">
    <location>
        <begin position="280"/>
        <end position="294"/>
    </location>
</feature>
<feature type="strand" evidence="12">
    <location>
        <begin position="315"/>
        <end position="321"/>
    </location>
</feature>
<feature type="strand" evidence="11">
    <location>
        <begin position="326"/>
        <end position="328"/>
    </location>
</feature>
<feature type="strand" evidence="12">
    <location>
        <begin position="330"/>
        <end position="335"/>
    </location>
</feature>
<feature type="helix" evidence="12">
    <location>
        <begin position="337"/>
        <end position="340"/>
    </location>
</feature>
<feature type="helix" evidence="12">
    <location>
        <begin position="344"/>
        <end position="357"/>
    </location>
</feature>
<feature type="helix" evidence="12">
    <location>
        <begin position="364"/>
        <end position="374"/>
    </location>
</feature>
<feature type="turn" evidence="12">
    <location>
        <begin position="380"/>
        <end position="382"/>
    </location>
</feature>
<feature type="strand" evidence="12">
    <location>
        <begin position="386"/>
        <end position="395"/>
    </location>
</feature>
<feature type="strand" evidence="12">
    <location>
        <begin position="398"/>
        <end position="405"/>
    </location>
</feature>
<feature type="turn" evidence="12">
    <location>
        <begin position="409"/>
        <end position="412"/>
    </location>
</feature>